<evidence type="ECO:0000255" key="1">
    <source>
        <dbReference type="HAMAP-Rule" id="MF_01227"/>
    </source>
</evidence>
<reference key="1">
    <citation type="journal article" date="2007" name="PLoS ONE">
        <title>Molecular correlates of host specialization in Staphylococcus aureus.</title>
        <authorList>
            <person name="Herron-Olson L."/>
            <person name="Fitzgerald J.R."/>
            <person name="Musser J.M."/>
            <person name="Kapur V."/>
        </authorList>
    </citation>
    <scope>NUCLEOTIDE SEQUENCE [LARGE SCALE GENOMIC DNA]</scope>
    <source>
        <strain>bovine RF122 / ET3-1</strain>
    </source>
</reference>
<feature type="chain" id="PRO_0000266224" description="CTP synthase">
    <location>
        <begin position="1"/>
        <end position="536"/>
    </location>
</feature>
<feature type="domain" description="Glutamine amidotransferase type-1" evidence="1">
    <location>
        <begin position="293"/>
        <end position="535"/>
    </location>
</feature>
<feature type="region of interest" description="Amidoligase domain" evidence="1">
    <location>
        <begin position="1"/>
        <end position="267"/>
    </location>
</feature>
<feature type="active site" description="Nucleophile; for glutamine hydrolysis" evidence="1">
    <location>
        <position position="382"/>
    </location>
</feature>
<feature type="active site" evidence="1">
    <location>
        <position position="508"/>
    </location>
</feature>
<feature type="active site" evidence="1">
    <location>
        <position position="510"/>
    </location>
</feature>
<feature type="binding site" evidence="1">
    <location>
        <position position="13"/>
    </location>
    <ligand>
        <name>CTP</name>
        <dbReference type="ChEBI" id="CHEBI:37563"/>
        <note>allosteric inhibitor</note>
    </ligand>
</feature>
<feature type="binding site" evidence="1">
    <location>
        <position position="13"/>
    </location>
    <ligand>
        <name>UTP</name>
        <dbReference type="ChEBI" id="CHEBI:46398"/>
    </ligand>
</feature>
<feature type="binding site" evidence="1">
    <location>
        <begin position="14"/>
        <end position="19"/>
    </location>
    <ligand>
        <name>ATP</name>
        <dbReference type="ChEBI" id="CHEBI:30616"/>
    </ligand>
</feature>
<feature type="binding site" evidence="1">
    <location>
        <position position="54"/>
    </location>
    <ligand>
        <name>L-glutamine</name>
        <dbReference type="ChEBI" id="CHEBI:58359"/>
    </ligand>
</feature>
<feature type="binding site" evidence="1">
    <location>
        <position position="71"/>
    </location>
    <ligand>
        <name>ATP</name>
        <dbReference type="ChEBI" id="CHEBI:30616"/>
    </ligand>
</feature>
<feature type="binding site" evidence="1">
    <location>
        <position position="71"/>
    </location>
    <ligand>
        <name>Mg(2+)</name>
        <dbReference type="ChEBI" id="CHEBI:18420"/>
    </ligand>
</feature>
<feature type="binding site" evidence="1">
    <location>
        <position position="141"/>
    </location>
    <ligand>
        <name>Mg(2+)</name>
        <dbReference type="ChEBI" id="CHEBI:18420"/>
    </ligand>
</feature>
<feature type="binding site" evidence="1">
    <location>
        <begin position="148"/>
        <end position="150"/>
    </location>
    <ligand>
        <name>CTP</name>
        <dbReference type="ChEBI" id="CHEBI:37563"/>
        <note>allosteric inhibitor</note>
    </ligand>
</feature>
<feature type="binding site" evidence="1">
    <location>
        <begin position="188"/>
        <end position="193"/>
    </location>
    <ligand>
        <name>CTP</name>
        <dbReference type="ChEBI" id="CHEBI:37563"/>
        <note>allosteric inhibitor</note>
    </ligand>
</feature>
<feature type="binding site" evidence="1">
    <location>
        <begin position="188"/>
        <end position="193"/>
    </location>
    <ligand>
        <name>UTP</name>
        <dbReference type="ChEBI" id="CHEBI:46398"/>
    </ligand>
</feature>
<feature type="binding site" evidence="1">
    <location>
        <position position="224"/>
    </location>
    <ligand>
        <name>CTP</name>
        <dbReference type="ChEBI" id="CHEBI:37563"/>
        <note>allosteric inhibitor</note>
    </ligand>
</feature>
<feature type="binding site" evidence="1">
    <location>
        <position position="224"/>
    </location>
    <ligand>
        <name>UTP</name>
        <dbReference type="ChEBI" id="CHEBI:46398"/>
    </ligand>
</feature>
<feature type="binding site" evidence="1">
    <location>
        <begin position="240"/>
        <end position="242"/>
    </location>
    <ligand>
        <name>ATP</name>
        <dbReference type="ChEBI" id="CHEBI:30616"/>
    </ligand>
</feature>
<feature type="binding site" evidence="1">
    <location>
        <position position="355"/>
    </location>
    <ligand>
        <name>L-glutamine</name>
        <dbReference type="ChEBI" id="CHEBI:58359"/>
    </ligand>
</feature>
<feature type="binding site" evidence="1">
    <location>
        <begin position="383"/>
        <end position="386"/>
    </location>
    <ligand>
        <name>L-glutamine</name>
        <dbReference type="ChEBI" id="CHEBI:58359"/>
    </ligand>
</feature>
<feature type="binding site" evidence="1">
    <location>
        <position position="406"/>
    </location>
    <ligand>
        <name>L-glutamine</name>
        <dbReference type="ChEBI" id="CHEBI:58359"/>
    </ligand>
</feature>
<feature type="binding site" evidence="1">
    <location>
        <position position="463"/>
    </location>
    <ligand>
        <name>L-glutamine</name>
        <dbReference type="ChEBI" id="CHEBI:58359"/>
    </ligand>
</feature>
<comment type="function">
    <text evidence="1">Catalyzes the ATP-dependent amination of UTP to CTP with either L-glutamine or ammonia as the source of nitrogen. Regulates intracellular CTP levels through interactions with the four ribonucleotide triphosphates.</text>
</comment>
<comment type="catalytic activity">
    <reaction evidence="1">
        <text>UTP + L-glutamine + ATP + H2O = CTP + L-glutamate + ADP + phosphate + 2 H(+)</text>
        <dbReference type="Rhea" id="RHEA:26426"/>
        <dbReference type="ChEBI" id="CHEBI:15377"/>
        <dbReference type="ChEBI" id="CHEBI:15378"/>
        <dbReference type="ChEBI" id="CHEBI:29985"/>
        <dbReference type="ChEBI" id="CHEBI:30616"/>
        <dbReference type="ChEBI" id="CHEBI:37563"/>
        <dbReference type="ChEBI" id="CHEBI:43474"/>
        <dbReference type="ChEBI" id="CHEBI:46398"/>
        <dbReference type="ChEBI" id="CHEBI:58359"/>
        <dbReference type="ChEBI" id="CHEBI:456216"/>
        <dbReference type="EC" id="6.3.4.2"/>
    </reaction>
</comment>
<comment type="catalytic activity">
    <reaction evidence="1">
        <text>L-glutamine + H2O = L-glutamate + NH4(+)</text>
        <dbReference type="Rhea" id="RHEA:15889"/>
        <dbReference type="ChEBI" id="CHEBI:15377"/>
        <dbReference type="ChEBI" id="CHEBI:28938"/>
        <dbReference type="ChEBI" id="CHEBI:29985"/>
        <dbReference type="ChEBI" id="CHEBI:58359"/>
    </reaction>
</comment>
<comment type="catalytic activity">
    <reaction evidence="1">
        <text>UTP + NH4(+) + ATP = CTP + ADP + phosphate + 2 H(+)</text>
        <dbReference type="Rhea" id="RHEA:16597"/>
        <dbReference type="ChEBI" id="CHEBI:15378"/>
        <dbReference type="ChEBI" id="CHEBI:28938"/>
        <dbReference type="ChEBI" id="CHEBI:30616"/>
        <dbReference type="ChEBI" id="CHEBI:37563"/>
        <dbReference type="ChEBI" id="CHEBI:43474"/>
        <dbReference type="ChEBI" id="CHEBI:46398"/>
        <dbReference type="ChEBI" id="CHEBI:456216"/>
    </reaction>
</comment>
<comment type="activity regulation">
    <text evidence="1">Allosterically activated by GTP, when glutamine is the substrate; GTP has no effect on the reaction when ammonia is the substrate. The allosteric effector GTP functions by stabilizing the protein conformation that binds the tetrahedral intermediate(s) formed during glutamine hydrolysis. Inhibited by the product CTP, via allosteric rather than competitive inhibition.</text>
</comment>
<comment type="pathway">
    <text evidence="1">Pyrimidine metabolism; CTP biosynthesis via de novo pathway; CTP from UDP: step 2/2.</text>
</comment>
<comment type="subunit">
    <text evidence="1">Homotetramer.</text>
</comment>
<comment type="miscellaneous">
    <text evidence="1">CTPSs have evolved a hybrid strategy for distinguishing between UTP and CTP. The overlapping regions of the product feedback inhibitory and substrate sites recognize a common feature in both compounds, the triphosphate moiety. To differentiate isosteric substrate and product pyrimidine rings, an additional pocket far from the expected kinase/ligase catalytic site, specifically recognizes the cytosine and ribose portions of the product inhibitor.</text>
</comment>
<comment type="similarity">
    <text evidence="1">Belongs to the CTP synthase family.</text>
</comment>
<dbReference type="EC" id="6.3.4.2" evidence="1"/>
<dbReference type="EMBL" id="AJ938182">
    <property type="protein sequence ID" value="CAI81700.1"/>
    <property type="molecule type" value="Genomic_DNA"/>
</dbReference>
<dbReference type="RefSeq" id="WP_000159960.1">
    <property type="nucleotide sequence ID" value="NC_007622.1"/>
</dbReference>
<dbReference type="SMR" id="Q2YUM6"/>
<dbReference type="KEGG" id="sab:SAB2011c"/>
<dbReference type="HOGENOM" id="CLU_011675_5_0_9"/>
<dbReference type="UniPathway" id="UPA00159">
    <property type="reaction ID" value="UER00277"/>
</dbReference>
<dbReference type="GO" id="GO:0005829">
    <property type="term" value="C:cytosol"/>
    <property type="evidence" value="ECO:0007669"/>
    <property type="project" value="TreeGrafter"/>
</dbReference>
<dbReference type="GO" id="GO:0005524">
    <property type="term" value="F:ATP binding"/>
    <property type="evidence" value="ECO:0007669"/>
    <property type="project" value="UniProtKB-KW"/>
</dbReference>
<dbReference type="GO" id="GO:0003883">
    <property type="term" value="F:CTP synthase activity"/>
    <property type="evidence" value="ECO:0007669"/>
    <property type="project" value="UniProtKB-UniRule"/>
</dbReference>
<dbReference type="GO" id="GO:0004359">
    <property type="term" value="F:glutaminase activity"/>
    <property type="evidence" value="ECO:0007669"/>
    <property type="project" value="RHEA"/>
</dbReference>
<dbReference type="GO" id="GO:0042802">
    <property type="term" value="F:identical protein binding"/>
    <property type="evidence" value="ECO:0007669"/>
    <property type="project" value="TreeGrafter"/>
</dbReference>
<dbReference type="GO" id="GO:0046872">
    <property type="term" value="F:metal ion binding"/>
    <property type="evidence" value="ECO:0007669"/>
    <property type="project" value="UniProtKB-KW"/>
</dbReference>
<dbReference type="GO" id="GO:0044210">
    <property type="term" value="P:'de novo' CTP biosynthetic process"/>
    <property type="evidence" value="ECO:0007669"/>
    <property type="project" value="UniProtKB-UniRule"/>
</dbReference>
<dbReference type="GO" id="GO:0019856">
    <property type="term" value="P:pyrimidine nucleobase biosynthetic process"/>
    <property type="evidence" value="ECO:0007669"/>
    <property type="project" value="TreeGrafter"/>
</dbReference>
<dbReference type="CDD" id="cd03113">
    <property type="entry name" value="CTPS_N"/>
    <property type="match status" value="1"/>
</dbReference>
<dbReference type="CDD" id="cd01746">
    <property type="entry name" value="GATase1_CTP_Synthase"/>
    <property type="match status" value="1"/>
</dbReference>
<dbReference type="FunFam" id="3.40.50.300:FF:000009">
    <property type="entry name" value="CTP synthase"/>
    <property type="match status" value="1"/>
</dbReference>
<dbReference type="FunFam" id="3.40.50.880:FF:000002">
    <property type="entry name" value="CTP synthase"/>
    <property type="match status" value="1"/>
</dbReference>
<dbReference type="Gene3D" id="3.40.50.880">
    <property type="match status" value="1"/>
</dbReference>
<dbReference type="Gene3D" id="3.40.50.300">
    <property type="entry name" value="P-loop containing nucleotide triphosphate hydrolases"/>
    <property type="match status" value="1"/>
</dbReference>
<dbReference type="HAMAP" id="MF_01227">
    <property type="entry name" value="PyrG"/>
    <property type="match status" value="1"/>
</dbReference>
<dbReference type="InterPro" id="IPR029062">
    <property type="entry name" value="Class_I_gatase-like"/>
</dbReference>
<dbReference type="InterPro" id="IPR004468">
    <property type="entry name" value="CTP_synthase"/>
</dbReference>
<dbReference type="InterPro" id="IPR017456">
    <property type="entry name" value="CTP_synthase_N"/>
</dbReference>
<dbReference type="InterPro" id="IPR017926">
    <property type="entry name" value="GATASE"/>
</dbReference>
<dbReference type="InterPro" id="IPR033828">
    <property type="entry name" value="GATase1_CTP_Synthase"/>
</dbReference>
<dbReference type="InterPro" id="IPR027417">
    <property type="entry name" value="P-loop_NTPase"/>
</dbReference>
<dbReference type="NCBIfam" id="NF003792">
    <property type="entry name" value="PRK05380.1"/>
    <property type="match status" value="1"/>
</dbReference>
<dbReference type="NCBIfam" id="TIGR00337">
    <property type="entry name" value="PyrG"/>
    <property type="match status" value="1"/>
</dbReference>
<dbReference type="PANTHER" id="PTHR11550">
    <property type="entry name" value="CTP SYNTHASE"/>
    <property type="match status" value="1"/>
</dbReference>
<dbReference type="PANTHER" id="PTHR11550:SF0">
    <property type="entry name" value="CTP SYNTHASE-RELATED"/>
    <property type="match status" value="1"/>
</dbReference>
<dbReference type="Pfam" id="PF06418">
    <property type="entry name" value="CTP_synth_N"/>
    <property type="match status" value="1"/>
</dbReference>
<dbReference type="Pfam" id="PF00117">
    <property type="entry name" value="GATase"/>
    <property type="match status" value="1"/>
</dbReference>
<dbReference type="SUPFAM" id="SSF52317">
    <property type="entry name" value="Class I glutamine amidotransferase-like"/>
    <property type="match status" value="1"/>
</dbReference>
<dbReference type="SUPFAM" id="SSF52540">
    <property type="entry name" value="P-loop containing nucleoside triphosphate hydrolases"/>
    <property type="match status" value="1"/>
</dbReference>
<dbReference type="PROSITE" id="PS51273">
    <property type="entry name" value="GATASE_TYPE_1"/>
    <property type="match status" value="1"/>
</dbReference>
<protein>
    <recommendedName>
        <fullName evidence="1">CTP synthase</fullName>
        <ecNumber evidence="1">6.3.4.2</ecNumber>
    </recommendedName>
    <alternativeName>
        <fullName evidence="1">Cytidine 5'-triphosphate synthase</fullName>
    </alternativeName>
    <alternativeName>
        <fullName evidence="1">Cytidine triphosphate synthetase</fullName>
        <shortName evidence="1">CTP synthetase</shortName>
        <shortName evidence="1">CTPS</shortName>
    </alternativeName>
    <alternativeName>
        <fullName evidence="1">UTP--ammonia ligase</fullName>
    </alternativeName>
</protein>
<keyword id="KW-0067">ATP-binding</keyword>
<keyword id="KW-0315">Glutamine amidotransferase</keyword>
<keyword id="KW-0436">Ligase</keyword>
<keyword id="KW-0460">Magnesium</keyword>
<keyword id="KW-0479">Metal-binding</keyword>
<keyword id="KW-0547">Nucleotide-binding</keyword>
<keyword id="KW-0665">Pyrimidine biosynthesis</keyword>
<sequence length="536" mass="59992">MTKFIFVTGGVVSSLGKGITASSLGRLLKDRGLNVTIQKFDPYLNVDPGTMSPYQHGEVFVTDDGAETDLDLGHYERFIDINLNKFSNVTAGKVYSHVLKKERRGDYLGGTVQVIPHITNEIKERLLLAGESTNADVVITEIGGTTGDIESLPFIEAIRQIRSDLGRENVMYVHCTLLPYIKAAGEMKTKPTQHSVKELRGLGIQPDLIVVRTEYEMTQDLKDKIALFCDINKESVIECRDADSLYEIPLQLSQQNMDDIVIKRLQLNAKYETQLDEWKQLLDIVNNLDGKITIGLVGKYVSLQDAYLSVVESLKHAGYPFAKDIDIRWIDSSEVTDENAAEYLADVDGILVPGGFGFRASEGKISAIKYARENNVPFFGICLGMQLATVEFSRNVLGLEGAHSAELDPATPYPIIDLLPEQKDIEDLGGTLRLGLYPCSIKEGTLAQDVYGKAEIEERHRHRYEFNNDYREQLEANGMVISGTSPDGRLVEMVEIPTNDFFIACQFHPEFLSRPNRPHPIFKSFIEASLKYQQNK</sequence>
<name>PYRG_STAAB</name>
<proteinExistence type="inferred from homology"/>
<gene>
    <name evidence="1" type="primary">pyrG</name>
    <name type="ordered locus">SAB2011c</name>
</gene>
<organism>
    <name type="scientific">Staphylococcus aureus (strain bovine RF122 / ET3-1)</name>
    <dbReference type="NCBI Taxonomy" id="273036"/>
    <lineage>
        <taxon>Bacteria</taxon>
        <taxon>Bacillati</taxon>
        <taxon>Bacillota</taxon>
        <taxon>Bacilli</taxon>
        <taxon>Bacillales</taxon>
        <taxon>Staphylococcaceae</taxon>
        <taxon>Staphylococcus</taxon>
    </lineage>
</organism>
<accession>Q2YUM6</accession>